<protein>
    <recommendedName>
        <fullName evidence="1">Enolase</fullName>
        <ecNumber evidence="1">4.2.1.11</ecNumber>
    </recommendedName>
    <alternativeName>
        <fullName evidence="1">2-phospho-D-glycerate hydro-lyase</fullName>
    </alternativeName>
    <alternativeName>
        <fullName evidence="1">2-phosphoglycerate dehydratase</fullName>
    </alternativeName>
</protein>
<proteinExistence type="inferred from homology"/>
<feature type="chain" id="PRO_1000019203" description="Enolase">
    <location>
        <begin position="1"/>
        <end position="431"/>
    </location>
</feature>
<feature type="active site" description="Proton donor" evidence="1">
    <location>
        <position position="208"/>
    </location>
</feature>
<feature type="active site" description="Proton acceptor" evidence="1">
    <location>
        <position position="340"/>
    </location>
</feature>
<feature type="binding site" evidence="1">
    <location>
        <position position="166"/>
    </location>
    <ligand>
        <name>(2R)-2-phosphoglycerate</name>
        <dbReference type="ChEBI" id="CHEBI:58289"/>
    </ligand>
</feature>
<feature type="binding site" evidence="1">
    <location>
        <position position="245"/>
    </location>
    <ligand>
        <name>Mg(2+)</name>
        <dbReference type="ChEBI" id="CHEBI:18420"/>
    </ligand>
</feature>
<feature type="binding site" evidence="1">
    <location>
        <position position="288"/>
    </location>
    <ligand>
        <name>Mg(2+)</name>
        <dbReference type="ChEBI" id="CHEBI:18420"/>
    </ligand>
</feature>
<feature type="binding site" evidence="1">
    <location>
        <position position="315"/>
    </location>
    <ligand>
        <name>Mg(2+)</name>
        <dbReference type="ChEBI" id="CHEBI:18420"/>
    </ligand>
</feature>
<feature type="binding site" evidence="1">
    <location>
        <position position="340"/>
    </location>
    <ligand>
        <name>(2R)-2-phosphoglycerate</name>
        <dbReference type="ChEBI" id="CHEBI:58289"/>
    </ligand>
</feature>
<feature type="binding site" evidence="1">
    <location>
        <position position="369"/>
    </location>
    <ligand>
        <name>(2R)-2-phosphoglycerate</name>
        <dbReference type="ChEBI" id="CHEBI:58289"/>
    </ligand>
</feature>
<feature type="binding site" evidence="1">
    <location>
        <position position="370"/>
    </location>
    <ligand>
        <name>(2R)-2-phosphoglycerate</name>
        <dbReference type="ChEBI" id="CHEBI:58289"/>
    </ligand>
</feature>
<feature type="binding site" evidence="1">
    <location>
        <position position="391"/>
    </location>
    <ligand>
        <name>(2R)-2-phosphoglycerate</name>
        <dbReference type="ChEBI" id="CHEBI:58289"/>
    </ligand>
</feature>
<gene>
    <name evidence="1" type="primary">eno</name>
    <name type="ordered locus">CLI_0295</name>
</gene>
<comment type="function">
    <text evidence="1">Catalyzes the reversible conversion of 2-phosphoglycerate (2-PG) into phosphoenolpyruvate (PEP). It is essential for the degradation of carbohydrates via glycolysis.</text>
</comment>
<comment type="catalytic activity">
    <reaction evidence="1">
        <text>(2R)-2-phosphoglycerate = phosphoenolpyruvate + H2O</text>
        <dbReference type="Rhea" id="RHEA:10164"/>
        <dbReference type="ChEBI" id="CHEBI:15377"/>
        <dbReference type="ChEBI" id="CHEBI:58289"/>
        <dbReference type="ChEBI" id="CHEBI:58702"/>
        <dbReference type="EC" id="4.2.1.11"/>
    </reaction>
</comment>
<comment type="cofactor">
    <cofactor evidence="1">
        <name>Mg(2+)</name>
        <dbReference type="ChEBI" id="CHEBI:18420"/>
    </cofactor>
    <text evidence="1">Binds a second Mg(2+) ion via substrate during catalysis.</text>
</comment>
<comment type="pathway">
    <text evidence="1">Carbohydrate degradation; glycolysis; pyruvate from D-glyceraldehyde 3-phosphate: step 4/5.</text>
</comment>
<comment type="subcellular location">
    <subcellularLocation>
        <location evidence="1">Cytoplasm</location>
    </subcellularLocation>
    <subcellularLocation>
        <location evidence="1">Secreted</location>
    </subcellularLocation>
    <subcellularLocation>
        <location evidence="1">Cell surface</location>
    </subcellularLocation>
    <text evidence="1">Fractions of enolase are present in both the cytoplasm and on the cell surface.</text>
</comment>
<comment type="similarity">
    <text evidence="1">Belongs to the enolase family.</text>
</comment>
<sequence length="431" mass="46436">MKNYIEIVDVYARQILDSRCNPTVEVEVELEDGTVGVAAVPSGASTGAFEAVELRDGDKSKYLGKGVLKAVDNVNTIIADELVGMNVLDQVAIDKTMIELDGTDNKAKLGANAMLGVSLACAKAAANSLGMSLYQYIGGVNAKVLPVPMMNIINGGKHADNNVDLQEFMIMPAGAPSFSEALRMCSEVYHALKSTLKSQGYDTGVGDEGGFAPNLKSNEEAIVVIIEAIKEAGYTPGKDIFIALDPASSEIFEDGKYNLAGEGRVLTPEEMANYYVELAEKYPIISIEDGMAEEDWDGWKILTEKIGNKVQLVGDDLFVTNTERLSKGIKLGVANSILIKLNQIGTLTETLNAIEMAERAGYTAVVSHRSGETEDTTIADLVVAVNAGQIKTGAPARSERVAKYNQLLRIEEELNDMGEYRGLKAFYNINK</sequence>
<organism>
    <name type="scientific">Clostridium botulinum (strain Langeland / NCTC 10281 / Type F)</name>
    <dbReference type="NCBI Taxonomy" id="441772"/>
    <lineage>
        <taxon>Bacteria</taxon>
        <taxon>Bacillati</taxon>
        <taxon>Bacillota</taxon>
        <taxon>Clostridia</taxon>
        <taxon>Eubacteriales</taxon>
        <taxon>Clostridiaceae</taxon>
        <taxon>Clostridium</taxon>
    </lineage>
</organism>
<evidence type="ECO:0000255" key="1">
    <source>
        <dbReference type="HAMAP-Rule" id="MF_00318"/>
    </source>
</evidence>
<dbReference type="EC" id="4.2.1.11" evidence="1"/>
<dbReference type="EMBL" id="CP000728">
    <property type="protein sequence ID" value="ABS40523.1"/>
    <property type="molecule type" value="Genomic_DNA"/>
</dbReference>
<dbReference type="RefSeq" id="WP_003399038.1">
    <property type="nucleotide sequence ID" value="NC_009699.1"/>
</dbReference>
<dbReference type="SMR" id="A7G9Y3"/>
<dbReference type="KEGG" id="cbf:CLI_0295"/>
<dbReference type="HOGENOM" id="CLU_031223_2_1_9"/>
<dbReference type="UniPathway" id="UPA00109">
    <property type="reaction ID" value="UER00187"/>
</dbReference>
<dbReference type="Proteomes" id="UP000002410">
    <property type="component" value="Chromosome"/>
</dbReference>
<dbReference type="GO" id="GO:0009986">
    <property type="term" value="C:cell surface"/>
    <property type="evidence" value="ECO:0007669"/>
    <property type="project" value="UniProtKB-SubCell"/>
</dbReference>
<dbReference type="GO" id="GO:0005576">
    <property type="term" value="C:extracellular region"/>
    <property type="evidence" value="ECO:0007669"/>
    <property type="project" value="UniProtKB-SubCell"/>
</dbReference>
<dbReference type="GO" id="GO:0000015">
    <property type="term" value="C:phosphopyruvate hydratase complex"/>
    <property type="evidence" value="ECO:0007669"/>
    <property type="project" value="InterPro"/>
</dbReference>
<dbReference type="GO" id="GO:0000287">
    <property type="term" value="F:magnesium ion binding"/>
    <property type="evidence" value="ECO:0007669"/>
    <property type="project" value="UniProtKB-UniRule"/>
</dbReference>
<dbReference type="GO" id="GO:0004634">
    <property type="term" value="F:phosphopyruvate hydratase activity"/>
    <property type="evidence" value="ECO:0007669"/>
    <property type="project" value="UniProtKB-UniRule"/>
</dbReference>
<dbReference type="GO" id="GO:0006096">
    <property type="term" value="P:glycolytic process"/>
    <property type="evidence" value="ECO:0007669"/>
    <property type="project" value="UniProtKB-UniRule"/>
</dbReference>
<dbReference type="CDD" id="cd03313">
    <property type="entry name" value="enolase"/>
    <property type="match status" value="1"/>
</dbReference>
<dbReference type="FunFam" id="3.20.20.120:FF:000001">
    <property type="entry name" value="Enolase"/>
    <property type="match status" value="1"/>
</dbReference>
<dbReference type="FunFam" id="3.30.390.10:FF:000001">
    <property type="entry name" value="Enolase"/>
    <property type="match status" value="1"/>
</dbReference>
<dbReference type="Gene3D" id="3.20.20.120">
    <property type="entry name" value="Enolase-like C-terminal domain"/>
    <property type="match status" value="1"/>
</dbReference>
<dbReference type="Gene3D" id="3.30.390.10">
    <property type="entry name" value="Enolase-like, N-terminal domain"/>
    <property type="match status" value="1"/>
</dbReference>
<dbReference type="HAMAP" id="MF_00318">
    <property type="entry name" value="Enolase"/>
    <property type="match status" value="1"/>
</dbReference>
<dbReference type="InterPro" id="IPR000941">
    <property type="entry name" value="Enolase"/>
</dbReference>
<dbReference type="InterPro" id="IPR036849">
    <property type="entry name" value="Enolase-like_C_sf"/>
</dbReference>
<dbReference type="InterPro" id="IPR029017">
    <property type="entry name" value="Enolase-like_N"/>
</dbReference>
<dbReference type="InterPro" id="IPR020810">
    <property type="entry name" value="Enolase_C"/>
</dbReference>
<dbReference type="InterPro" id="IPR020809">
    <property type="entry name" value="Enolase_CS"/>
</dbReference>
<dbReference type="InterPro" id="IPR020811">
    <property type="entry name" value="Enolase_N"/>
</dbReference>
<dbReference type="NCBIfam" id="TIGR01060">
    <property type="entry name" value="eno"/>
    <property type="match status" value="1"/>
</dbReference>
<dbReference type="PANTHER" id="PTHR11902">
    <property type="entry name" value="ENOLASE"/>
    <property type="match status" value="1"/>
</dbReference>
<dbReference type="PANTHER" id="PTHR11902:SF1">
    <property type="entry name" value="ENOLASE"/>
    <property type="match status" value="1"/>
</dbReference>
<dbReference type="Pfam" id="PF00113">
    <property type="entry name" value="Enolase_C"/>
    <property type="match status" value="1"/>
</dbReference>
<dbReference type="Pfam" id="PF03952">
    <property type="entry name" value="Enolase_N"/>
    <property type="match status" value="1"/>
</dbReference>
<dbReference type="PIRSF" id="PIRSF001400">
    <property type="entry name" value="Enolase"/>
    <property type="match status" value="1"/>
</dbReference>
<dbReference type="PRINTS" id="PR00148">
    <property type="entry name" value="ENOLASE"/>
</dbReference>
<dbReference type="SFLD" id="SFLDF00002">
    <property type="entry name" value="enolase"/>
    <property type="match status" value="1"/>
</dbReference>
<dbReference type="SFLD" id="SFLDG00178">
    <property type="entry name" value="enolase"/>
    <property type="match status" value="1"/>
</dbReference>
<dbReference type="SMART" id="SM01192">
    <property type="entry name" value="Enolase_C"/>
    <property type="match status" value="1"/>
</dbReference>
<dbReference type="SMART" id="SM01193">
    <property type="entry name" value="Enolase_N"/>
    <property type="match status" value="1"/>
</dbReference>
<dbReference type="SUPFAM" id="SSF51604">
    <property type="entry name" value="Enolase C-terminal domain-like"/>
    <property type="match status" value="1"/>
</dbReference>
<dbReference type="SUPFAM" id="SSF54826">
    <property type="entry name" value="Enolase N-terminal domain-like"/>
    <property type="match status" value="1"/>
</dbReference>
<dbReference type="PROSITE" id="PS00164">
    <property type="entry name" value="ENOLASE"/>
    <property type="match status" value="1"/>
</dbReference>
<accession>A7G9Y3</accession>
<reference key="1">
    <citation type="submission" date="2007-06" db="EMBL/GenBank/DDBJ databases">
        <authorList>
            <person name="Brinkac L.M."/>
            <person name="Daugherty S."/>
            <person name="Dodson R.J."/>
            <person name="Madupu R."/>
            <person name="Brown J.L."/>
            <person name="Bruce D."/>
            <person name="Detter C."/>
            <person name="Munk C."/>
            <person name="Smith L.A."/>
            <person name="Smith T.J."/>
            <person name="White O."/>
            <person name="Brettin T.S."/>
        </authorList>
    </citation>
    <scope>NUCLEOTIDE SEQUENCE [LARGE SCALE GENOMIC DNA]</scope>
    <source>
        <strain>Langeland / NCTC 10281 / Type F</strain>
    </source>
</reference>
<name>ENO_CLOBL</name>
<keyword id="KW-0963">Cytoplasm</keyword>
<keyword id="KW-0324">Glycolysis</keyword>
<keyword id="KW-0456">Lyase</keyword>
<keyword id="KW-0460">Magnesium</keyword>
<keyword id="KW-0479">Metal-binding</keyword>
<keyword id="KW-0964">Secreted</keyword>